<protein>
    <recommendedName>
        <fullName evidence="1">Vacuolar membrane protease</fullName>
        <ecNumber evidence="6">3.4.-.-</ecNumber>
    </recommendedName>
    <alternativeName>
        <fullName evidence="1">FXNA-related family protease 1</fullName>
    </alternativeName>
</protein>
<keyword id="KW-0325">Glycoprotein</keyword>
<keyword id="KW-0378">Hydrolase</keyword>
<keyword id="KW-0472">Membrane</keyword>
<keyword id="KW-0479">Metal-binding</keyword>
<keyword id="KW-0482">Metalloprotease</keyword>
<keyword id="KW-0645">Protease</keyword>
<keyword id="KW-1185">Reference proteome</keyword>
<keyword id="KW-0812">Transmembrane</keyword>
<keyword id="KW-1133">Transmembrane helix</keyword>
<keyword id="KW-0926">Vacuole</keyword>
<keyword id="KW-0862">Zinc</keyword>
<organism>
    <name type="scientific">Laccaria bicolor (strain S238N-H82 / ATCC MYA-4686)</name>
    <name type="common">Bicoloured deceiver</name>
    <name type="synonym">Laccaria laccata var. bicolor</name>
    <dbReference type="NCBI Taxonomy" id="486041"/>
    <lineage>
        <taxon>Eukaryota</taxon>
        <taxon>Fungi</taxon>
        <taxon>Dikarya</taxon>
        <taxon>Basidiomycota</taxon>
        <taxon>Agaricomycotina</taxon>
        <taxon>Agaricomycetes</taxon>
        <taxon>Agaricomycetidae</taxon>
        <taxon>Agaricales</taxon>
        <taxon>Agaricineae</taxon>
        <taxon>Hydnangiaceae</taxon>
        <taxon>Laccaria</taxon>
    </lineage>
</organism>
<feature type="chain" id="PRO_0000411718" description="Vacuolar membrane protease">
    <location>
        <begin position="1"/>
        <end position="1019"/>
    </location>
</feature>
<feature type="topological domain" description="Cytoplasmic" evidence="1">
    <location>
        <begin position="1"/>
        <end position="69"/>
    </location>
</feature>
<feature type="transmembrane region" description="Helical; Name=1" evidence="3">
    <location>
        <begin position="70"/>
        <end position="90"/>
    </location>
</feature>
<feature type="topological domain" description="Vacuolar" evidence="1">
    <location>
        <begin position="91"/>
        <end position="404"/>
    </location>
</feature>
<feature type="transmembrane region" description="Helical; Name=2" evidence="3">
    <location>
        <begin position="405"/>
        <end position="425"/>
    </location>
</feature>
<feature type="topological domain" description="Cytoplasmic" evidence="1">
    <location>
        <begin position="426"/>
        <end position="466"/>
    </location>
</feature>
<feature type="transmembrane region" description="Helical; Name=3" evidence="3">
    <location>
        <begin position="467"/>
        <end position="487"/>
    </location>
</feature>
<feature type="topological domain" description="Vacuolar" evidence="1">
    <location>
        <begin position="488"/>
        <end position="497"/>
    </location>
</feature>
<feature type="transmembrane region" description="Helical; Name=4" evidence="3">
    <location>
        <begin position="498"/>
        <end position="518"/>
    </location>
</feature>
<feature type="topological domain" description="Cytoplasmic" evidence="1">
    <location>
        <begin position="519"/>
        <end position="539"/>
    </location>
</feature>
<feature type="transmembrane region" description="Helical; Name=5" evidence="3">
    <location>
        <begin position="540"/>
        <end position="560"/>
    </location>
</feature>
<feature type="topological domain" description="Vacuolar" evidence="1">
    <location>
        <begin position="561"/>
        <end position="565"/>
    </location>
</feature>
<feature type="transmembrane region" description="Helical; Name=6" evidence="3">
    <location>
        <begin position="566"/>
        <end position="586"/>
    </location>
</feature>
<feature type="topological domain" description="Cytoplasmic" evidence="1">
    <location>
        <begin position="587"/>
        <end position="651"/>
    </location>
</feature>
<feature type="transmembrane region" description="Helical; Name=7" evidence="3">
    <location>
        <begin position="652"/>
        <end position="672"/>
    </location>
</feature>
<feature type="topological domain" description="Vacuolar" evidence="1">
    <location>
        <begin position="673"/>
        <end position="692"/>
    </location>
</feature>
<feature type="transmembrane region" description="Helical; Name=8" evidence="3">
    <location>
        <begin position="693"/>
        <end position="713"/>
    </location>
</feature>
<feature type="topological domain" description="Cytoplasmic" evidence="1">
    <location>
        <begin position="714"/>
        <end position="719"/>
    </location>
</feature>
<feature type="transmembrane region" description="Helical; Name=9" evidence="3">
    <location>
        <begin position="720"/>
        <end position="740"/>
    </location>
</feature>
<feature type="topological domain" description="Vacuolar" evidence="1">
    <location>
        <begin position="741"/>
        <end position="1019"/>
    </location>
</feature>
<feature type="region of interest" description="Disordered" evidence="5">
    <location>
        <begin position="603"/>
        <end position="634"/>
    </location>
</feature>
<feature type="active site" description="Proton acceptor" evidence="2">
    <location>
        <position position="239"/>
    </location>
</feature>
<feature type="binding site" evidence="2">
    <location>
        <position position="195"/>
    </location>
    <ligand>
        <name>Zn(2+)</name>
        <dbReference type="ChEBI" id="CHEBI:29105"/>
        <label>1</label>
        <note>catalytic</note>
    </ligand>
</feature>
<feature type="binding site" evidence="2">
    <location>
        <position position="207"/>
    </location>
    <ligand>
        <name>Zn(2+)</name>
        <dbReference type="ChEBI" id="CHEBI:29105"/>
        <label>1</label>
        <note>catalytic</note>
    </ligand>
</feature>
<feature type="binding site" evidence="2">
    <location>
        <position position="207"/>
    </location>
    <ligand>
        <name>Zn(2+)</name>
        <dbReference type="ChEBI" id="CHEBI:29105"/>
        <label>2</label>
        <note>catalytic</note>
    </ligand>
</feature>
<feature type="binding site" evidence="2">
    <location>
        <position position="240"/>
    </location>
    <ligand>
        <name>Zn(2+)</name>
        <dbReference type="ChEBI" id="CHEBI:29105"/>
        <label>2</label>
        <note>catalytic</note>
    </ligand>
</feature>
<feature type="binding site" evidence="2">
    <location>
        <position position="265"/>
    </location>
    <ligand>
        <name>Zn(2+)</name>
        <dbReference type="ChEBI" id="CHEBI:29105"/>
        <label>1</label>
        <note>catalytic</note>
    </ligand>
</feature>
<feature type="binding site" evidence="2">
    <location>
        <position position="341"/>
    </location>
    <ligand>
        <name>Zn(2+)</name>
        <dbReference type="ChEBI" id="CHEBI:29105"/>
        <label>2</label>
        <note>catalytic</note>
    </ligand>
</feature>
<feature type="site" description="Transition state stabilizer" evidence="2">
    <location>
        <position position="340"/>
    </location>
</feature>
<feature type="glycosylation site" description="N-linked (GlcNAc...) asparagine" evidence="4">
    <location>
        <position position="158"/>
    </location>
</feature>
<feature type="glycosylation site" description="N-linked (GlcNAc...) asparagine" evidence="4">
    <location>
        <position position="256"/>
    </location>
</feature>
<feature type="glycosylation site" description="N-linked (GlcNAc...) asparagine" evidence="4">
    <location>
        <position position="774"/>
    </location>
</feature>
<evidence type="ECO:0000250" key="1">
    <source>
        <dbReference type="UniProtKB" id="P38244"/>
    </source>
</evidence>
<evidence type="ECO:0000250" key="2">
    <source>
        <dbReference type="UniProtKB" id="P80561"/>
    </source>
</evidence>
<evidence type="ECO:0000255" key="3"/>
<evidence type="ECO:0000255" key="4">
    <source>
        <dbReference type="PROSITE-ProRule" id="PRU00498"/>
    </source>
</evidence>
<evidence type="ECO:0000256" key="5">
    <source>
        <dbReference type="SAM" id="MobiDB-lite"/>
    </source>
</evidence>
<evidence type="ECO:0000305" key="6"/>
<sequence length="1019" mass="113713">MFLEINFYSTFFQRRPSLWKERCKFEEVDAQGNSISYSHHPPDLTGQRSPLTPTTMRIVDRIPTVVGFRVIPTTVLVLLTYLTIFTLVIVTDWLPEPPKNQNGLDLKQAYTDLRHITAHPHPYNSHYNDAVHDYILSRVRPVAASTSFVHISDDQTSNGSWASPGYGVYFEGTNILVKIDGKSSNGNDGVLFSAHYDSVSTAPGATDDGMGVVTLLQLIDYFAKHRPDRTAIFNINNGEEDWLNGAHAFLQHTWSNLTDTFLNLEGAAAGGRPILFRATSTSPVRAFRSDYVPHPHANVISSDAFARGVIRSGTDYEVYTGAGAEMEGLDVAFYKGRSRYHTKYDAVPYTNGGERSLWAMMETAQGAGNALLNAKRHKQDQGSGGTPVYFDLVKAELVIFYLNDLLIYNVVSLVVGPISLIFFVVCEYVLRNERARQPNGHPVSRPSVLEWLKQRSWLRALWRRSKFWIALVITIALQALLVWGYLAFNSFTVYSSPYLVLISFFSLAYLSLVIPLTFTFNQTQSPTAKYIAPEREKHTLLIQVYIFTWILLLFSTIAVARAQVGGLYFVTAWNTGVWIACLLAAVEGMMLPVPQGGPRVRFHSAHHHHHHEHEEDQDADDDDREQRQPPTEATPLIGYSRASLRKPQEGGVVGWWIVHLLLTIPAPVLLIAQMGSLLLDSLPQTLADGSPAYVVYAAASLTAVLLAVPLTPFSGKLHRGLFFLFFLSFLIVTAYLWLAFPFSSADPLKVFFQQKVTLSNVVSERHSSIMGLSNSTVHPTAGVRKVVTAITGTPYYLKNEIIPRLPSASGKELKCRDEKAKRGLVTCEWESTLVPSPGGRNPWEDDFAAAQGRVGATSKSRQSWFKAEVARTGVRKGQIVLQGRNTRSCRLYFDSRPIIKYVVEGGHEGMQKGYEVGKVGASEVRLWSRTRDREFVVDFEWEDDDGREGEGITGRIACEWVEYESGNLDNGDGQWDLQRGGGERAKIPAFEEVLAFLPEWAVASKTTDGLVEAWSPFSV</sequence>
<reference key="1">
    <citation type="journal article" date="2008" name="Nature">
        <title>The genome of Laccaria bicolor provides insights into mycorrhizal symbiosis.</title>
        <authorList>
            <person name="Martin F."/>
            <person name="Aerts A."/>
            <person name="Ahren D."/>
            <person name="Brun A."/>
            <person name="Danchin E.G.J."/>
            <person name="Duchaussoy F."/>
            <person name="Gibon J."/>
            <person name="Kohler A."/>
            <person name="Lindquist E."/>
            <person name="Pereda V."/>
            <person name="Salamov A."/>
            <person name="Shapiro H.J."/>
            <person name="Wuyts J."/>
            <person name="Blaudez D."/>
            <person name="Buee M."/>
            <person name="Brokstein P."/>
            <person name="Canbaeck B."/>
            <person name="Cohen D."/>
            <person name="Courty P.E."/>
            <person name="Coutinho P.M."/>
            <person name="Delaruelle C."/>
            <person name="Detter J.C."/>
            <person name="Deveau A."/>
            <person name="DiFazio S."/>
            <person name="Duplessis S."/>
            <person name="Fraissinet-Tachet L."/>
            <person name="Lucic E."/>
            <person name="Frey-Klett P."/>
            <person name="Fourrey C."/>
            <person name="Feussner I."/>
            <person name="Gay G."/>
            <person name="Grimwood J."/>
            <person name="Hoegger P.J."/>
            <person name="Jain P."/>
            <person name="Kilaru S."/>
            <person name="Labbe J."/>
            <person name="Lin Y.C."/>
            <person name="Legue V."/>
            <person name="Le Tacon F."/>
            <person name="Marmeisse R."/>
            <person name="Melayah D."/>
            <person name="Montanini B."/>
            <person name="Muratet M."/>
            <person name="Nehls U."/>
            <person name="Niculita-Hirzel H."/>
            <person name="Oudot-Le Secq M.P."/>
            <person name="Peter M."/>
            <person name="Quesneville H."/>
            <person name="Rajashekar B."/>
            <person name="Reich M."/>
            <person name="Rouhier N."/>
            <person name="Schmutz J."/>
            <person name="Yin T."/>
            <person name="Chalot M."/>
            <person name="Henrissat B."/>
            <person name="Kuees U."/>
            <person name="Lucas S."/>
            <person name="Van de Peer Y."/>
            <person name="Podila G.K."/>
            <person name="Polle A."/>
            <person name="Pukkila P.J."/>
            <person name="Richardson P.M."/>
            <person name="Rouze P."/>
            <person name="Sanders I.R."/>
            <person name="Stajich J.E."/>
            <person name="Tunlid A."/>
            <person name="Tuskan G."/>
            <person name="Grigoriev I.V."/>
        </authorList>
    </citation>
    <scope>NUCLEOTIDE SEQUENCE [LARGE SCALE GENOMIC DNA]</scope>
    <source>
        <strain>S238N-H82 / ATCC MYA-4686</strain>
    </source>
</reference>
<dbReference type="EC" id="3.4.-.-" evidence="6"/>
<dbReference type="EMBL" id="DS547103">
    <property type="protein sequence ID" value="EDR07831.1"/>
    <property type="molecule type" value="Genomic_DNA"/>
</dbReference>
<dbReference type="RefSeq" id="XP_001881620.1">
    <property type="nucleotide sequence ID" value="XM_001881585.1"/>
</dbReference>
<dbReference type="SMR" id="B0DC53"/>
<dbReference type="FunCoup" id="B0DC53">
    <property type="interactions" value="12"/>
</dbReference>
<dbReference type="STRING" id="486041.B0DC53"/>
<dbReference type="GeneID" id="6077313"/>
<dbReference type="KEGG" id="lbc:LACBIDRAFT_294465"/>
<dbReference type="HOGENOM" id="CLU_006412_1_0_1"/>
<dbReference type="InParanoid" id="B0DC53"/>
<dbReference type="OrthoDB" id="76293at2759"/>
<dbReference type="Proteomes" id="UP000001194">
    <property type="component" value="Unassembled WGS sequence"/>
</dbReference>
<dbReference type="GO" id="GO:0005774">
    <property type="term" value="C:vacuolar membrane"/>
    <property type="evidence" value="ECO:0007669"/>
    <property type="project" value="UniProtKB-SubCell"/>
</dbReference>
<dbReference type="GO" id="GO:0046872">
    <property type="term" value="F:metal ion binding"/>
    <property type="evidence" value="ECO:0007669"/>
    <property type="project" value="UniProtKB-KW"/>
</dbReference>
<dbReference type="GO" id="GO:0008235">
    <property type="term" value="F:metalloexopeptidase activity"/>
    <property type="evidence" value="ECO:0007669"/>
    <property type="project" value="InterPro"/>
</dbReference>
<dbReference type="GO" id="GO:0006508">
    <property type="term" value="P:proteolysis"/>
    <property type="evidence" value="ECO:0007669"/>
    <property type="project" value="UniProtKB-KW"/>
</dbReference>
<dbReference type="CDD" id="cd03875">
    <property type="entry name" value="M28_Fxna_like"/>
    <property type="match status" value="1"/>
</dbReference>
<dbReference type="Gene3D" id="3.40.630.10">
    <property type="entry name" value="Zn peptidases"/>
    <property type="match status" value="1"/>
</dbReference>
<dbReference type="InterPro" id="IPR048024">
    <property type="entry name" value="Fxna-like_M28_dom"/>
</dbReference>
<dbReference type="InterPro" id="IPR045175">
    <property type="entry name" value="M28_fam"/>
</dbReference>
<dbReference type="InterPro" id="IPR007484">
    <property type="entry name" value="Peptidase_M28"/>
</dbReference>
<dbReference type="InterPro" id="IPR053975">
    <property type="entry name" value="PFF1_C"/>
</dbReference>
<dbReference type="InterPro" id="IPR053976">
    <property type="entry name" value="PFF1_TM"/>
</dbReference>
<dbReference type="PANTHER" id="PTHR12147">
    <property type="entry name" value="METALLOPEPTIDASE M28 FAMILY MEMBER"/>
    <property type="match status" value="1"/>
</dbReference>
<dbReference type="PANTHER" id="PTHR12147:SF58">
    <property type="entry name" value="VACUOLAR MEMBRANE PROTEASE"/>
    <property type="match status" value="1"/>
</dbReference>
<dbReference type="Pfam" id="PF04389">
    <property type="entry name" value="Peptidase_M28"/>
    <property type="match status" value="1"/>
</dbReference>
<dbReference type="Pfam" id="PF22250">
    <property type="entry name" value="PFF1_C"/>
    <property type="match status" value="1"/>
</dbReference>
<dbReference type="Pfam" id="PF22251">
    <property type="entry name" value="PFF1_TM"/>
    <property type="match status" value="2"/>
</dbReference>
<dbReference type="SUPFAM" id="SSF53187">
    <property type="entry name" value="Zn-dependent exopeptidases"/>
    <property type="match status" value="1"/>
</dbReference>
<accession>B0DC53</accession>
<proteinExistence type="inferred from homology"/>
<gene>
    <name type="ORF">LACBIDRAFT_294465</name>
</gene>
<comment type="function">
    <text evidence="1">May be involved in vacuolar sorting and osmoregulation.</text>
</comment>
<comment type="cofactor">
    <cofactor evidence="2">
        <name>Zn(2+)</name>
        <dbReference type="ChEBI" id="CHEBI:29105"/>
    </cofactor>
    <text evidence="2">Binds 2 Zn(2+) ions per subunit.</text>
</comment>
<comment type="subcellular location">
    <subcellularLocation>
        <location evidence="1">Vacuole membrane</location>
        <topology evidence="3">Multi-pass membrane protein</topology>
    </subcellularLocation>
</comment>
<comment type="similarity">
    <text evidence="6">Belongs to the peptidase M28 family.</text>
</comment>
<name>PFF1_LACBS</name>